<protein>
    <recommendedName>
        <fullName evidence="5">XK-related protein 6</fullName>
    </recommendedName>
</protein>
<comment type="subcellular location">
    <subcellularLocation>
        <location evidence="1">Cell membrane</location>
        <topology evidence="2">Multi-pass membrane protein</topology>
    </subcellularLocation>
</comment>
<comment type="similarity">
    <text evidence="5">Belongs to the XK family.</text>
</comment>
<proteinExistence type="evidence at transcript level"/>
<dbReference type="EMBL" id="AY534260">
    <property type="protein sequence ID" value="AAT07109.1"/>
    <property type="molecule type" value="mRNA"/>
</dbReference>
<dbReference type="RefSeq" id="NP_001012042.1">
    <property type="nucleotide sequence ID" value="NM_001012042.1"/>
</dbReference>
<dbReference type="SMR" id="Q5GH57"/>
<dbReference type="FunCoup" id="Q5GH57">
    <property type="interactions" value="1271"/>
</dbReference>
<dbReference type="STRING" id="10116.ENSRNOP00000015540"/>
<dbReference type="GlyGen" id="Q5GH57">
    <property type="glycosylation" value="2 sites"/>
</dbReference>
<dbReference type="PhosphoSitePlus" id="Q5GH57"/>
<dbReference type="SwissPalm" id="Q5GH57"/>
<dbReference type="PaxDb" id="10116-ENSRNOP00000015540"/>
<dbReference type="Ensembl" id="ENSRNOT00000015540.8">
    <property type="protein sequence ID" value="ENSRNOP00000015540.7"/>
    <property type="gene ID" value="ENSRNOG00000011634.8"/>
</dbReference>
<dbReference type="GeneID" id="305960"/>
<dbReference type="KEGG" id="rno:305960"/>
<dbReference type="UCSC" id="RGD:1310719">
    <property type="organism name" value="rat"/>
</dbReference>
<dbReference type="AGR" id="RGD:1310719"/>
<dbReference type="CTD" id="286046"/>
<dbReference type="RGD" id="1310719">
    <property type="gene designation" value="Xkr6"/>
</dbReference>
<dbReference type="eggNOG" id="KOG4790">
    <property type="taxonomic scope" value="Eukaryota"/>
</dbReference>
<dbReference type="GeneTree" id="ENSGT01110000267146"/>
<dbReference type="InParanoid" id="Q5GH57"/>
<dbReference type="OMA" id="VWVWQTI"/>
<dbReference type="OrthoDB" id="6356248at2759"/>
<dbReference type="PhylomeDB" id="Q5GH57"/>
<dbReference type="PRO" id="PR:Q5GH57"/>
<dbReference type="Proteomes" id="UP000002494">
    <property type="component" value="Chromosome 15"/>
</dbReference>
<dbReference type="GO" id="GO:0005886">
    <property type="term" value="C:plasma membrane"/>
    <property type="evidence" value="ECO:0000250"/>
    <property type="project" value="UniProtKB"/>
</dbReference>
<dbReference type="GO" id="GO:1902742">
    <property type="term" value="P:apoptotic process involved in development"/>
    <property type="evidence" value="ECO:0000318"/>
    <property type="project" value="GO_Central"/>
</dbReference>
<dbReference type="GO" id="GO:0043652">
    <property type="term" value="P:engulfment of apoptotic cell"/>
    <property type="evidence" value="ECO:0000318"/>
    <property type="project" value="GO_Central"/>
</dbReference>
<dbReference type="GO" id="GO:0070782">
    <property type="term" value="P:phosphatidylserine exposure on apoptotic cell surface"/>
    <property type="evidence" value="ECO:0000318"/>
    <property type="project" value="GO_Central"/>
</dbReference>
<dbReference type="InterPro" id="IPR018629">
    <property type="entry name" value="XK-rel"/>
</dbReference>
<dbReference type="InterPro" id="IPR050895">
    <property type="entry name" value="XK-related_scramblase"/>
</dbReference>
<dbReference type="PANTHER" id="PTHR16024">
    <property type="entry name" value="XK-RELATED PROTEIN"/>
    <property type="match status" value="1"/>
</dbReference>
<dbReference type="PANTHER" id="PTHR16024:SF9">
    <property type="entry name" value="XK-RELATED PROTEIN 6"/>
    <property type="match status" value="1"/>
</dbReference>
<dbReference type="Pfam" id="PF09815">
    <property type="entry name" value="XK-related"/>
    <property type="match status" value="1"/>
</dbReference>
<evidence type="ECO:0000250" key="1">
    <source>
        <dbReference type="UniProtKB" id="E9Q6C8"/>
    </source>
</evidence>
<evidence type="ECO:0000255" key="2"/>
<evidence type="ECO:0000256" key="3">
    <source>
        <dbReference type="SAM" id="MobiDB-lite"/>
    </source>
</evidence>
<evidence type="ECO:0000303" key="4">
    <source ref="1"/>
</evidence>
<evidence type="ECO:0000305" key="5"/>
<evidence type="ECO:0000312" key="6">
    <source>
        <dbReference type="RGD" id="1310719"/>
    </source>
</evidence>
<gene>
    <name evidence="6" type="primary">Xkr6</name>
    <name evidence="4" type="synonym">Xrg6</name>
</gene>
<feature type="chain" id="PRO_0000190786" description="XK-related protein 6">
    <location>
        <begin position="1"/>
        <end position="638"/>
    </location>
</feature>
<feature type="transmembrane region" description="Helical" evidence="2">
    <location>
        <begin position="127"/>
        <end position="147"/>
    </location>
</feature>
<feature type="transmembrane region" description="Helical" evidence="2">
    <location>
        <begin position="158"/>
        <end position="178"/>
    </location>
</feature>
<feature type="transmembrane region" description="Helical" evidence="2">
    <location>
        <begin position="315"/>
        <end position="335"/>
    </location>
</feature>
<feature type="transmembrane region" description="Helical" evidence="2">
    <location>
        <begin position="369"/>
        <end position="389"/>
    </location>
</feature>
<feature type="transmembrane region" description="Helical" evidence="2">
    <location>
        <begin position="410"/>
        <end position="430"/>
    </location>
</feature>
<feature type="transmembrane region" description="Helical" evidence="2">
    <location>
        <begin position="439"/>
        <end position="459"/>
    </location>
</feature>
<feature type="transmembrane region" description="Helical" evidence="2">
    <location>
        <begin position="470"/>
        <end position="490"/>
    </location>
</feature>
<feature type="region of interest" description="Disordered" evidence="3">
    <location>
        <begin position="24"/>
        <end position="43"/>
    </location>
</feature>
<feature type="region of interest" description="Disordered" evidence="3">
    <location>
        <begin position="82"/>
        <end position="117"/>
    </location>
</feature>
<feature type="compositionally biased region" description="Gly residues" evidence="3">
    <location>
        <begin position="33"/>
        <end position="43"/>
    </location>
</feature>
<accession>Q5GH57</accession>
<name>XKR6_RAT</name>
<reference key="1">
    <citation type="submission" date="2004-01" db="EMBL/GenBank/DDBJ databases">
        <title>A superfamily of XK-related genes (XRG) widely expressed in vertebrates and invertebrates.</title>
        <authorList>
            <person name="Huang C.-H."/>
            <person name="Chen Y."/>
        </authorList>
    </citation>
    <scope>NUCLEOTIDE SEQUENCE [MRNA]</scope>
    <source>
        <strain>Sprague-Dawley</strain>
    </source>
</reference>
<keyword id="KW-1003">Cell membrane</keyword>
<keyword id="KW-0472">Membrane</keyword>
<keyword id="KW-1185">Reference proteome</keyword>
<keyword id="KW-0812">Transmembrane</keyword>
<keyword id="KW-1133">Transmembrane helix</keyword>
<organism>
    <name type="scientific">Rattus norvegicus</name>
    <name type="common">Rat</name>
    <dbReference type="NCBI Taxonomy" id="10116"/>
    <lineage>
        <taxon>Eukaryota</taxon>
        <taxon>Metazoa</taxon>
        <taxon>Chordata</taxon>
        <taxon>Craniata</taxon>
        <taxon>Vertebrata</taxon>
        <taxon>Euteleostomi</taxon>
        <taxon>Mammalia</taxon>
        <taxon>Eutheria</taxon>
        <taxon>Euarchontoglires</taxon>
        <taxon>Glires</taxon>
        <taxon>Rodentia</taxon>
        <taxon>Myomorpha</taxon>
        <taxon>Muroidea</taxon>
        <taxon>Muridae</taxon>
        <taxon>Murinae</taxon>
        <taxon>Rattus</taxon>
    </lineage>
</organism>
<sequence>MAAKSDGGGVGVGFAQLHNLDEAVGSGEEDGEPGGGGCGGGDGSEPGESSSLHICHCCNTSSCYWGCRSACLRSLLGKKPRRSAAAADGGDQPLQPPGAAGRHPPTPSAGRPQPASPQVERPWLDCLWIVLALLVFFGDVGTDLWLALDYYRKGDYGCFGLTLFFVLVPSLLVQSLSFRWFVQDYTGGGLGAVEGLSSRGPPMMGAGYGHGAARGGPGAGGSATPGAQRLCRLSVWIWQSVIHLLQMGQVWRYIRTMYLGIQSQRQKEHQRRFYWAMMYEYADVNMLRLLETFLESAPQLVLQLCIMIQKNSAETLPCVSSVTSLMSLAWVLASYHKLLRDSRDDKKSMSYRGALIHLFWRLFTISSRVISFALFASIFQLYFGIFVVVHWCAMAFWIIHGGTDFCMSKWEEILFNMVVGIVYIFCWFNVKEGRTRYRMFAYYTIVLTENAALTFLWYFYRNPESTDSYAVPALCCVFVSFVAGITLMLLYYGVLHPMGPRAKVFASSCCAELLWGIPLPPDVEPMAPQTPGYRGTQVTPTRAVTEQQEDLTADTCLPVFQVRPMGPSTPSGRPYHPEGPLIKIDMPRKRYPAWDAHFVDRRLRRTINILQYVTPTAVGIRYRDGPLLYELLQYESSL</sequence>